<reference key="1">
    <citation type="journal article" date="1990" name="Virology">
        <title>Molecular cloning of the rinderpest virus matrix gene: comparative sequence analysis with other paramyxoviruses.</title>
        <authorList>
            <person name="Limo M."/>
            <person name="Yilma T."/>
        </authorList>
    </citation>
    <scope>NUCLEOTIDE SEQUENCE [GENOMIC RNA]</scope>
</reference>
<feature type="chain" id="PRO_0000142769" description="Matrix protein">
    <location>
        <begin position="1"/>
        <end position="335"/>
    </location>
</feature>
<name>MATRX_RINDK</name>
<proteinExistence type="inferred from homology"/>
<sequence length="335" mass="38285">MAEIYDFDKSAWDVKGSIQPIGPKTYSDGRLIPQVRVIDPGLGVRKDECFSYIFLWGLSEDSDPLSPPIGRTFGSLPLGVGRSTARPEELLKEATILDILVRRTAGFNEQLVFYDNSPLKVLTPWKKVLTSGSVFNANQVCETVNLIPLDFYQRFRVVYMSITRLSDNGGYDIPRHWPEFRSMNAIAFNSLVTIRFEQSPIEHWRILNSEHLLVATFMVHIGNFQRKKTDMYSADYCKPKIEKMGLVFALGGIGGTSLHIRATGKMSKTLWALEGFKKHLCYPLMDINEDLNRELWRSKCKIVRIQAVLQPSVPQDFRVYRDVIIEDDQGLFKIL</sequence>
<keyword id="KW-0261">Viral envelope protein</keyword>
<keyword id="KW-0468">Viral matrix protein</keyword>
<keyword id="KW-0946">Virion</keyword>
<evidence type="ECO:0000305" key="1"/>
<accession>P22046</accession>
<gene>
    <name type="primary">M</name>
</gene>
<organism>
    <name type="scientific">Rinderpest virus (strain Kabete O)</name>
    <name type="common">RDV</name>
    <dbReference type="NCBI Taxonomy" id="11242"/>
    <lineage>
        <taxon>Viruses</taxon>
        <taxon>Riboviria</taxon>
        <taxon>Orthornavirae</taxon>
        <taxon>Negarnaviricota</taxon>
        <taxon>Haploviricotina</taxon>
        <taxon>Monjiviricetes</taxon>
        <taxon>Mononegavirales</taxon>
        <taxon>Paramyxoviridae</taxon>
        <taxon>Orthoparamyxovirinae</taxon>
        <taxon>Morbillivirus</taxon>
        <taxon>Morbillivirus pecoris</taxon>
        <taxon>Rinderpest morbillivirus</taxon>
    </lineage>
</organism>
<protein>
    <recommendedName>
        <fullName>Matrix protein</fullName>
    </recommendedName>
</protein>
<comment type="function">
    <text>The M protein has a crucial role in virus assembly and interacts with the RNP complex as well as with the viral membrane.</text>
</comment>
<comment type="subcellular location">
    <subcellularLocation>
        <location evidence="1">Virion</location>
    </subcellularLocation>
</comment>
<comment type="similarity">
    <text evidence="1">Belongs to the morbillivirus/respirovirus/rubulavirus M protein family.</text>
</comment>
<organismHost>
    <name type="scientific">Bos indicus</name>
    <name type="common">Zebu</name>
    <dbReference type="NCBI Taxonomy" id="9915"/>
</organismHost>
<organismHost>
    <name type="scientific">Bos taurus</name>
    <name type="common">Bovine</name>
    <dbReference type="NCBI Taxonomy" id="9913"/>
</organismHost>
<organismHost>
    <name type="scientific">Bubalus bubalis</name>
    <name type="common">Domestic water buffalo</name>
    <dbReference type="NCBI Taxonomy" id="89462"/>
</organismHost>
<organismHost>
    <name type="scientific">Capra hircus</name>
    <name type="common">Goat</name>
    <dbReference type="NCBI Taxonomy" id="9925"/>
</organismHost>
<organismHost>
    <name type="scientific">Gazella</name>
    <name type="common">gazelles</name>
    <dbReference type="NCBI Taxonomy" id="9933"/>
</organismHost>
<organismHost>
    <name type="scientific">Giraffa camelopardalis</name>
    <name type="common">Giraffe</name>
    <dbReference type="NCBI Taxonomy" id="9894"/>
</organismHost>
<organismHost>
    <name type="scientific">Hippopotamus</name>
    <dbReference type="NCBI Taxonomy" id="9832"/>
</organismHost>
<organismHost>
    <name type="scientific">Ovis aries</name>
    <name type="common">Sheep</name>
    <dbReference type="NCBI Taxonomy" id="9940"/>
</organismHost>
<organismHost>
    <name type="scientific">Suidae</name>
    <name type="common">pigs</name>
    <dbReference type="NCBI Taxonomy" id="9821"/>
</organismHost>
<dbReference type="EMBL" id="M34018">
    <property type="protein sequence ID" value="AAA47398.1"/>
    <property type="molecule type" value="Genomic_RNA"/>
</dbReference>
<dbReference type="PIR" id="A34684">
    <property type="entry name" value="MFNZRP"/>
</dbReference>
<dbReference type="SMR" id="P22046"/>
<dbReference type="GO" id="GO:0019031">
    <property type="term" value="C:viral envelope"/>
    <property type="evidence" value="ECO:0007669"/>
    <property type="project" value="UniProtKB-KW"/>
</dbReference>
<dbReference type="GO" id="GO:0039660">
    <property type="term" value="F:structural constituent of virion"/>
    <property type="evidence" value="ECO:0007669"/>
    <property type="project" value="UniProtKB-KW"/>
</dbReference>
<dbReference type="GO" id="GO:0019068">
    <property type="term" value="P:virion assembly"/>
    <property type="evidence" value="ECO:0007669"/>
    <property type="project" value="InterPro"/>
</dbReference>
<dbReference type="Gene3D" id="2.70.20.60">
    <property type="entry name" value="Viral matrix protein, C-terminal domain"/>
    <property type="match status" value="1"/>
</dbReference>
<dbReference type="Gene3D" id="2.70.20.50">
    <property type="entry name" value="Viral matrix protein, N-terminal domain"/>
    <property type="match status" value="1"/>
</dbReference>
<dbReference type="InterPro" id="IPR042539">
    <property type="entry name" value="Matrix_C"/>
</dbReference>
<dbReference type="InterPro" id="IPR042540">
    <property type="entry name" value="Matrix_N"/>
</dbReference>
<dbReference type="InterPro" id="IPR055413">
    <property type="entry name" value="Matrix_Paramyxo_C"/>
</dbReference>
<dbReference type="InterPro" id="IPR000982">
    <property type="entry name" value="Matrix_Paramyxo_N"/>
</dbReference>
<dbReference type="Pfam" id="PF23765">
    <property type="entry name" value="Matrix_Paramyxo_C"/>
    <property type="match status" value="1"/>
</dbReference>
<dbReference type="Pfam" id="PF00661">
    <property type="entry name" value="Matrix_Paramyxo_N"/>
    <property type="match status" value="1"/>
</dbReference>